<comment type="function">
    <text evidence="1">DNA ligase that seals nicks in double-stranded DNA during DNA replication, DNA recombination and DNA repair.</text>
</comment>
<comment type="catalytic activity">
    <reaction evidence="1">
        <text>ATP + (deoxyribonucleotide)n-3'-hydroxyl + 5'-phospho-(deoxyribonucleotide)m = (deoxyribonucleotide)n+m + AMP + diphosphate.</text>
        <dbReference type="EC" id="6.5.1.1"/>
    </reaction>
</comment>
<comment type="cofactor">
    <cofactor evidence="1">
        <name>Mg(2+)</name>
        <dbReference type="ChEBI" id="CHEBI:18420"/>
    </cofactor>
</comment>
<comment type="similarity">
    <text evidence="1">Belongs to the ATP-dependent DNA ligase family.</text>
</comment>
<feature type="chain" id="PRO_0000365237" description="Probable DNA ligase">
    <location>
        <begin position="1"/>
        <end position="503"/>
    </location>
</feature>
<feature type="active site" description="N6-AMP-lysine intermediate" evidence="1">
    <location>
        <position position="212"/>
    </location>
</feature>
<feature type="binding site" evidence="1">
    <location>
        <position position="210"/>
    </location>
    <ligand>
        <name>ATP</name>
        <dbReference type="ChEBI" id="CHEBI:30616"/>
    </ligand>
</feature>
<feature type="binding site" evidence="1">
    <location>
        <position position="217"/>
    </location>
    <ligand>
        <name>ATP</name>
        <dbReference type="ChEBI" id="CHEBI:30616"/>
    </ligand>
</feature>
<feature type="binding site" evidence="1">
    <location>
        <position position="232"/>
    </location>
    <ligand>
        <name>ATP</name>
        <dbReference type="ChEBI" id="CHEBI:30616"/>
    </ligand>
</feature>
<feature type="binding site" evidence="1">
    <location>
        <position position="261"/>
    </location>
    <ligand>
        <name>ATP</name>
        <dbReference type="ChEBI" id="CHEBI:30616"/>
    </ligand>
</feature>
<feature type="binding site" evidence="1">
    <location>
        <position position="296"/>
    </location>
    <ligand>
        <name>ATP</name>
        <dbReference type="ChEBI" id="CHEBI:30616"/>
    </ligand>
</feature>
<feature type="binding site" evidence="1">
    <location>
        <position position="367"/>
    </location>
    <ligand>
        <name>ATP</name>
        <dbReference type="ChEBI" id="CHEBI:30616"/>
    </ligand>
</feature>
<feature type="binding site" evidence="1">
    <location>
        <position position="373"/>
    </location>
    <ligand>
        <name>ATP</name>
        <dbReference type="ChEBI" id="CHEBI:30616"/>
    </ligand>
</feature>
<name>DNLI_RHOJR</name>
<evidence type="ECO:0000255" key="1">
    <source>
        <dbReference type="HAMAP-Rule" id="MF_00407"/>
    </source>
</evidence>
<reference key="1">
    <citation type="journal article" date="2006" name="Proc. Natl. Acad. Sci. U.S.A.">
        <title>The complete genome of Rhodococcus sp. RHA1 provides insights into a catabolic powerhouse.</title>
        <authorList>
            <person name="McLeod M.P."/>
            <person name="Warren R.L."/>
            <person name="Hsiao W.W.L."/>
            <person name="Araki N."/>
            <person name="Myhre M."/>
            <person name="Fernandes C."/>
            <person name="Miyazawa D."/>
            <person name="Wong W."/>
            <person name="Lillquist A.L."/>
            <person name="Wang D."/>
            <person name="Dosanjh M."/>
            <person name="Hara H."/>
            <person name="Petrescu A."/>
            <person name="Morin R.D."/>
            <person name="Yang G."/>
            <person name="Stott J.M."/>
            <person name="Schein J.E."/>
            <person name="Shin H."/>
            <person name="Smailus D."/>
            <person name="Siddiqui A.S."/>
            <person name="Marra M.A."/>
            <person name="Jones S.J.M."/>
            <person name="Holt R."/>
            <person name="Brinkman F.S.L."/>
            <person name="Miyauchi K."/>
            <person name="Fukuda M."/>
            <person name="Davies J.E."/>
            <person name="Mohn W.W."/>
            <person name="Eltis L.D."/>
        </authorList>
    </citation>
    <scope>NUCLEOTIDE SEQUENCE [LARGE SCALE GENOMIC DNA]</scope>
    <source>
        <strain>RHA1</strain>
    </source>
</reference>
<dbReference type="EC" id="6.5.1.1" evidence="1"/>
<dbReference type="EMBL" id="CP000431">
    <property type="protein sequence ID" value="ABG93461.1"/>
    <property type="molecule type" value="Genomic_DNA"/>
</dbReference>
<dbReference type="RefSeq" id="WP_011594590.1">
    <property type="nucleotide sequence ID" value="NC_008268.1"/>
</dbReference>
<dbReference type="SMR" id="Q0SG75"/>
<dbReference type="KEGG" id="rha:RHA1_ro01648"/>
<dbReference type="PATRIC" id="fig|101510.16.peg.1671"/>
<dbReference type="eggNOG" id="COG1793">
    <property type="taxonomic scope" value="Bacteria"/>
</dbReference>
<dbReference type="HOGENOM" id="CLU_005138_6_1_11"/>
<dbReference type="OrthoDB" id="3733803at2"/>
<dbReference type="Proteomes" id="UP000008710">
    <property type="component" value="Chromosome"/>
</dbReference>
<dbReference type="GO" id="GO:0005524">
    <property type="term" value="F:ATP binding"/>
    <property type="evidence" value="ECO:0007669"/>
    <property type="project" value="UniProtKB-UniRule"/>
</dbReference>
<dbReference type="GO" id="GO:0003677">
    <property type="term" value="F:DNA binding"/>
    <property type="evidence" value="ECO:0007669"/>
    <property type="project" value="InterPro"/>
</dbReference>
<dbReference type="GO" id="GO:0003910">
    <property type="term" value="F:DNA ligase (ATP) activity"/>
    <property type="evidence" value="ECO:0007669"/>
    <property type="project" value="UniProtKB-UniRule"/>
</dbReference>
<dbReference type="GO" id="GO:0046872">
    <property type="term" value="F:metal ion binding"/>
    <property type="evidence" value="ECO:0007669"/>
    <property type="project" value="UniProtKB-KW"/>
</dbReference>
<dbReference type="GO" id="GO:0051301">
    <property type="term" value="P:cell division"/>
    <property type="evidence" value="ECO:0007669"/>
    <property type="project" value="UniProtKB-KW"/>
</dbReference>
<dbReference type="GO" id="GO:0071897">
    <property type="term" value="P:DNA biosynthetic process"/>
    <property type="evidence" value="ECO:0007669"/>
    <property type="project" value="InterPro"/>
</dbReference>
<dbReference type="GO" id="GO:0006310">
    <property type="term" value="P:DNA recombination"/>
    <property type="evidence" value="ECO:0007669"/>
    <property type="project" value="UniProtKB-UniRule"/>
</dbReference>
<dbReference type="GO" id="GO:0006281">
    <property type="term" value="P:DNA repair"/>
    <property type="evidence" value="ECO:0007669"/>
    <property type="project" value="UniProtKB-UniRule"/>
</dbReference>
<dbReference type="GO" id="GO:0006260">
    <property type="term" value="P:DNA replication"/>
    <property type="evidence" value="ECO:0007669"/>
    <property type="project" value="UniProtKB-UniRule"/>
</dbReference>
<dbReference type="CDD" id="cd07901">
    <property type="entry name" value="Adenylation_DNA_ligase_Arch_LigB"/>
    <property type="match status" value="1"/>
</dbReference>
<dbReference type="FunFam" id="2.40.50.140:FF:000163">
    <property type="entry name" value="Probable DNA ligase"/>
    <property type="match status" value="1"/>
</dbReference>
<dbReference type="Gene3D" id="1.10.3260.10">
    <property type="entry name" value="DNA ligase, ATP-dependent, N-terminal domain"/>
    <property type="match status" value="1"/>
</dbReference>
<dbReference type="Gene3D" id="3.30.470.30">
    <property type="entry name" value="DNA ligase/mRNA capping enzyme"/>
    <property type="match status" value="1"/>
</dbReference>
<dbReference type="Gene3D" id="2.40.50.140">
    <property type="entry name" value="Nucleic acid-binding proteins"/>
    <property type="match status" value="1"/>
</dbReference>
<dbReference type="HAMAP" id="MF_00407">
    <property type="entry name" value="DNA_ligase"/>
    <property type="match status" value="1"/>
</dbReference>
<dbReference type="InterPro" id="IPR050191">
    <property type="entry name" value="ATP-dep_DNA_ligase"/>
</dbReference>
<dbReference type="InterPro" id="IPR022865">
    <property type="entry name" value="DNA_ligae_ATP-dep_bac/arc"/>
</dbReference>
<dbReference type="InterPro" id="IPR000977">
    <property type="entry name" value="DNA_ligase_ATP-dep"/>
</dbReference>
<dbReference type="InterPro" id="IPR012309">
    <property type="entry name" value="DNA_ligase_ATP-dep_C"/>
</dbReference>
<dbReference type="InterPro" id="IPR012310">
    <property type="entry name" value="DNA_ligase_ATP-dep_cent"/>
</dbReference>
<dbReference type="InterPro" id="IPR016059">
    <property type="entry name" value="DNA_ligase_ATP-dep_CS"/>
</dbReference>
<dbReference type="InterPro" id="IPR012308">
    <property type="entry name" value="DNA_ligase_ATP-dep_N"/>
</dbReference>
<dbReference type="InterPro" id="IPR036599">
    <property type="entry name" value="DNA_ligase_N_sf"/>
</dbReference>
<dbReference type="InterPro" id="IPR012340">
    <property type="entry name" value="NA-bd_OB-fold"/>
</dbReference>
<dbReference type="NCBIfam" id="TIGR00574">
    <property type="entry name" value="dnl1"/>
    <property type="match status" value="1"/>
</dbReference>
<dbReference type="NCBIfam" id="NF002868">
    <property type="entry name" value="PRK03180.1"/>
    <property type="match status" value="1"/>
</dbReference>
<dbReference type="PANTHER" id="PTHR45674">
    <property type="entry name" value="DNA LIGASE 1/3 FAMILY MEMBER"/>
    <property type="match status" value="1"/>
</dbReference>
<dbReference type="PANTHER" id="PTHR45674:SF13">
    <property type="entry name" value="DNA LIGASE-RELATED"/>
    <property type="match status" value="1"/>
</dbReference>
<dbReference type="Pfam" id="PF04679">
    <property type="entry name" value="DNA_ligase_A_C"/>
    <property type="match status" value="1"/>
</dbReference>
<dbReference type="Pfam" id="PF01068">
    <property type="entry name" value="DNA_ligase_A_M"/>
    <property type="match status" value="1"/>
</dbReference>
<dbReference type="Pfam" id="PF04675">
    <property type="entry name" value="DNA_ligase_A_N"/>
    <property type="match status" value="1"/>
</dbReference>
<dbReference type="SUPFAM" id="SSF117018">
    <property type="entry name" value="ATP-dependent DNA ligase DNA-binding domain"/>
    <property type="match status" value="1"/>
</dbReference>
<dbReference type="SUPFAM" id="SSF56091">
    <property type="entry name" value="DNA ligase/mRNA capping enzyme, catalytic domain"/>
    <property type="match status" value="1"/>
</dbReference>
<dbReference type="SUPFAM" id="SSF50249">
    <property type="entry name" value="Nucleic acid-binding proteins"/>
    <property type="match status" value="1"/>
</dbReference>
<dbReference type="PROSITE" id="PS00697">
    <property type="entry name" value="DNA_LIGASE_A1"/>
    <property type="match status" value="1"/>
</dbReference>
<dbReference type="PROSITE" id="PS50160">
    <property type="entry name" value="DNA_LIGASE_A3"/>
    <property type="match status" value="1"/>
</dbReference>
<organism>
    <name type="scientific">Rhodococcus jostii (strain RHA1)</name>
    <dbReference type="NCBI Taxonomy" id="101510"/>
    <lineage>
        <taxon>Bacteria</taxon>
        <taxon>Bacillati</taxon>
        <taxon>Actinomycetota</taxon>
        <taxon>Actinomycetes</taxon>
        <taxon>Mycobacteriales</taxon>
        <taxon>Nocardiaceae</taxon>
        <taxon>Rhodococcus</taxon>
    </lineage>
</organism>
<sequence length="503" mass="54393">MLFSQIVATSRDVGATRSRKVKVGALREVLIQLEPAEVEPVVAWLSGELRQGRIGIGWRTLGDIPATPADVPAVTVSDLDGTVTAVAGISGSGSAARRRKLLADLFARTTADERDFLLRLLTGDLRQGALEGVMTDAIAAAADLPVEPVRRAFMLSGRLPATAVAAFDGGVDALTAFRLEVGRPVRPMLASPAESLTDAWTELGGDVSVEYKLDGARIQVHRNGDDVHVFTRTLREITGSVPELVELVAGLPCTSAVFDGETLALTDSGRPRPFQETMSRFGAESARDLLLHPYFFDCLHLDGVDLLDAPLEERLAALERVAPQHRIPGLIRPDSDGAATHFDDALAAGHEGVMVKSLAAPYAAGRRGRAWQKVKPEHTLDLVVLGAEWGYGRRTGYLSNLHLGARDPDGGEPIMVGKTFKGLTDALLQWQTDEFPRHERDRDDHTVYLHPDLVVEIELDGVQVSTRYPGGLALRFARVLRYRPDKTAAEADTIDAVRALLPG</sequence>
<gene>
    <name evidence="1" type="primary">lig</name>
    <name type="ordered locus">RHA1_ro01648</name>
</gene>
<proteinExistence type="inferred from homology"/>
<protein>
    <recommendedName>
        <fullName evidence="1">Probable DNA ligase</fullName>
        <ecNumber evidence="1">6.5.1.1</ecNumber>
    </recommendedName>
    <alternativeName>
        <fullName evidence="1">Polydeoxyribonucleotide synthase [ATP]</fullName>
    </alternativeName>
</protein>
<accession>Q0SG75</accession>
<keyword id="KW-0067">ATP-binding</keyword>
<keyword id="KW-0131">Cell cycle</keyword>
<keyword id="KW-0132">Cell division</keyword>
<keyword id="KW-0227">DNA damage</keyword>
<keyword id="KW-0233">DNA recombination</keyword>
<keyword id="KW-0234">DNA repair</keyword>
<keyword id="KW-0235">DNA replication</keyword>
<keyword id="KW-0436">Ligase</keyword>
<keyword id="KW-0460">Magnesium</keyword>
<keyword id="KW-0479">Metal-binding</keyword>
<keyword id="KW-0547">Nucleotide-binding</keyword>